<reference key="1">
    <citation type="journal article" date="2005" name="Nature">
        <title>The DNA sequence of the human X chromosome.</title>
        <authorList>
            <person name="Ross M.T."/>
            <person name="Grafham D.V."/>
            <person name="Coffey A.J."/>
            <person name="Scherer S."/>
            <person name="McLay K."/>
            <person name="Muzny D."/>
            <person name="Platzer M."/>
            <person name="Howell G.R."/>
            <person name="Burrows C."/>
            <person name="Bird C.P."/>
            <person name="Frankish A."/>
            <person name="Lovell F.L."/>
            <person name="Howe K.L."/>
            <person name="Ashurst J.L."/>
            <person name="Fulton R.S."/>
            <person name="Sudbrak R."/>
            <person name="Wen G."/>
            <person name="Jones M.C."/>
            <person name="Hurles M.E."/>
            <person name="Andrews T.D."/>
            <person name="Scott C.E."/>
            <person name="Searle S."/>
            <person name="Ramser J."/>
            <person name="Whittaker A."/>
            <person name="Deadman R."/>
            <person name="Carter N.P."/>
            <person name="Hunt S.E."/>
            <person name="Chen R."/>
            <person name="Cree A."/>
            <person name="Gunaratne P."/>
            <person name="Havlak P."/>
            <person name="Hodgson A."/>
            <person name="Metzker M.L."/>
            <person name="Richards S."/>
            <person name="Scott G."/>
            <person name="Steffen D."/>
            <person name="Sodergren E."/>
            <person name="Wheeler D.A."/>
            <person name="Worley K.C."/>
            <person name="Ainscough R."/>
            <person name="Ambrose K.D."/>
            <person name="Ansari-Lari M.A."/>
            <person name="Aradhya S."/>
            <person name="Ashwell R.I."/>
            <person name="Babbage A.K."/>
            <person name="Bagguley C.L."/>
            <person name="Ballabio A."/>
            <person name="Banerjee R."/>
            <person name="Barker G.E."/>
            <person name="Barlow K.F."/>
            <person name="Barrett I.P."/>
            <person name="Bates K.N."/>
            <person name="Beare D.M."/>
            <person name="Beasley H."/>
            <person name="Beasley O."/>
            <person name="Beck A."/>
            <person name="Bethel G."/>
            <person name="Blechschmidt K."/>
            <person name="Brady N."/>
            <person name="Bray-Allen S."/>
            <person name="Bridgeman A.M."/>
            <person name="Brown A.J."/>
            <person name="Brown M.J."/>
            <person name="Bonnin D."/>
            <person name="Bruford E.A."/>
            <person name="Buhay C."/>
            <person name="Burch P."/>
            <person name="Burford D."/>
            <person name="Burgess J."/>
            <person name="Burrill W."/>
            <person name="Burton J."/>
            <person name="Bye J.M."/>
            <person name="Carder C."/>
            <person name="Carrel L."/>
            <person name="Chako J."/>
            <person name="Chapman J.C."/>
            <person name="Chavez D."/>
            <person name="Chen E."/>
            <person name="Chen G."/>
            <person name="Chen Y."/>
            <person name="Chen Z."/>
            <person name="Chinault C."/>
            <person name="Ciccodicola A."/>
            <person name="Clark S.Y."/>
            <person name="Clarke G."/>
            <person name="Clee C.M."/>
            <person name="Clegg S."/>
            <person name="Clerc-Blankenburg K."/>
            <person name="Clifford K."/>
            <person name="Cobley V."/>
            <person name="Cole C.G."/>
            <person name="Conquer J.S."/>
            <person name="Corby N."/>
            <person name="Connor R.E."/>
            <person name="David R."/>
            <person name="Davies J."/>
            <person name="Davis C."/>
            <person name="Davis J."/>
            <person name="Delgado O."/>
            <person name="Deshazo D."/>
            <person name="Dhami P."/>
            <person name="Ding Y."/>
            <person name="Dinh H."/>
            <person name="Dodsworth S."/>
            <person name="Draper H."/>
            <person name="Dugan-Rocha S."/>
            <person name="Dunham A."/>
            <person name="Dunn M."/>
            <person name="Durbin K.J."/>
            <person name="Dutta I."/>
            <person name="Eades T."/>
            <person name="Ellwood M."/>
            <person name="Emery-Cohen A."/>
            <person name="Errington H."/>
            <person name="Evans K.L."/>
            <person name="Faulkner L."/>
            <person name="Francis F."/>
            <person name="Frankland J."/>
            <person name="Fraser A.E."/>
            <person name="Galgoczy P."/>
            <person name="Gilbert J."/>
            <person name="Gill R."/>
            <person name="Gloeckner G."/>
            <person name="Gregory S.G."/>
            <person name="Gribble S."/>
            <person name="Griffiths C."/>
            <person name="Grocock R."/>
            <person name="Gu Y."/>
            <person name="Gwilliam R."/>
            <person name="Hamilton C."/>
            <person name="Hart E.A."/>
            <person name="Hawes A."/>
            <person name="Heath P.D."/>
            <person name="Heitmann K."/>
            <person name="Hennig S."/>
            <person name="Hernandez J."/>
            <person name="Hinzmann B."/>
            <person name="Ho S."/>
            <person name="Hoffs M."/>
            <person name="Howden P.J."/>
            <person name="Huckle E.J."/>
            <person name="Hume J."/>
            <person name="Hunt P.J."/>
            <person name="Hunt A.R."/>
            <person name="Isherwood J."/>
            <person name="Jacob L."/>
            <person name="Johnson D."/>
            <person name="Jones S."/>
            <person name="de Jong P.J."/>
            <person name="Joseph S.S."/>
            <person name="Keenan S."/>
            <person name="Kelly S."/>
            <person name="Kershaw J.K."/>
            <person name="Khan Z."/>
            <person name="Kioschis P."/>
            <person name="Klages S."/>
            <person name="Knights A.J."/>
            <person name="Kosiura A."/>
            <person name="Kovar-Smith C."/>
            <person name="Laird G.K."/>
            <person name="Langford C."/>
            <person name="Lawlor S."/>
            <person name="Leversha M."/>
            <person name="Lewis L."/>
            <person name="Liu W."/>
            <person name="Lloyd C."/>
            <person name="Lloyd D.M."/>
            <person name="Loulseged H."/>
            <person name="Loveland J.E."/>
            <person name="Lovell J.D."/>
            <person name="Lozado R."/>
            <person name="Lu J."/>
            <person name="Lyne R."/>
            <person name="Ma J."/>
            <person name="Maheshwari M."/>
            <person name="Matthews L.H."/>
            <person name="McDowall J."/>
            <person name="McLaren S."/>
            <person name="McMurray A."/>
            <person name="Meidl P."/>
            <person name="Meitinger T."/>
            <person name="Milne S."/>
            <person name="Miner G."/>
            <person name="Mistry S.L."/>
            <person name="Morgan M."/>
            <person name="Morris S."/>
            <person name="Mueller I."/>
            <person name="Mullikin J.C."/>
            <person name="Nguyen N."/>
            <person name="Nordsiek G."/>
            <person name="Nyakatura G."/>
            <person name="O'dell C.N."/>
            <person name="Okwuonu G."/>
            <person name="Palmer S."/>
            <person name="Pandian R."/>
            <person name="Parker D."/>
            <person name="Parrish J."/>
            <person name="Pasternak S."/>
            <person name="Patel D."/>
            <person name="Pearce A.V."/>
            <person name="Pearson D.M."/>
            <person name="Pelan S.E."/>
            <person name="Perez L."/>
            <person name="Porter K.M."/>
            <person name="Ramsey Y."/>
            <person name="Reichwald K."/>
            <person name="Rhodes S."/>
            <person name="Ridler K.A."/>
            <person name="Schlessinger D."/>
            <person name="Schueler M.G."/>
            <person name="Sehra H.K."/>
            <person name="Shaw-Smith C."/>
            <person name="Shen H."/>
            <person name="Sheridan E.M."/>
            <person name="Shownkeen R."/>
            <person name="Skuce C.D."/>
            <person name="Smith M.L."/>
            <person name="Sotheran E.C."/>
            <person name="Steingruber H.E."/>
            <person name="Steward C.A."/>
            <person name="Storey R."/>
            <person name="Swann R.M."/>
            <person name="Swarbreck D."/>
            <person name="Tabor P.E."/>
            <person name="Taudien S."/>
            <person name="Taylor T."/>
            <person name="Teague B."/>
            <person name="Thomas K."/>
            <person name="Thorpe A."/>
            <person name="Timms K."/>
            <person name="Tracey A."/>
            <person name="Trevanion S."/>
            <person name="Tromans A.C."/>
            <person name="d'Urso M."/>
            <person name="Verduzco D."/>
            <person name="Villasana D."/>
            <person name="Waldron L."/>
            <person name="Wall M."/>
            <person name="Wang Q."/>
            <person name="Warren J."/>
            <person name="Warry G.L."/>
            <person name="Wei X."/>
            <person name="West A."/>
            <person name="Whitehead S.L."/>
            <person name="Whiteley M.N."/>
            <person name="Wilkinson J.E."/>
            <person name="Willey D.L."/>
            <person name="Williams G."/>
            <person name="Williams L."/>
            <person name="Williamson A."/>
            <person name="Williamson H."/>
            <person name="Wilming L."/>
            <person name="Woodmansey R.L."/>
            <person name="Wray P.W."/>
            <person name="Yen J."/>
            <person name="Zhang J."/>
            <person name="Zhou J."/>
            <person name="Zoghbi H."/>
            <person name="Zorilla S."/>
            <person name="Buck D."/>
            <person name="Reinhardt R."/>
            <person name="Poustka A."/>
            <person name="Rosenthal A."/>
            <person name="Lehrach H."/>
            <person name="Meindl A."/>
            <person name="Minx P.J."/>
            <person name="Hillier L.W."/>
            <person name="Willard H.F."/>
            <person name="Wilson R.K."/>
            <person name="Waterston R.H."/>
            <person name="Rice C.M."/>
            <person name="Vaudin M."/>
            <person name="Coulson A."/>
            <person name="Nelson D.L."/>
            <person name="Weinstock G."/>
            <person name="Sulston J.E."/>
            <person name="Durbin R.M."/>
            <person name="Hubbard T."/>
            <person name="Gibbs R.A."/>
            <person name="Beck S."/>
            <person name="Rogers J."/>
            <person name="Bentley D.R."/>
        </authorList>
    </citation>
    <scope>NUCLEOTIDE SEQUENCE [LARGE SCALE GENOMIC DNA]</scope>
</reference>
<comment type="function">
    <text evidence="2">Core component of nucleosome. Nucleosomes wrap and compact DNA into chromatin, limiting DNA accessibility to the cellular machineries which require DNA as a template. Histones thereby play a central role in transcription regulation, DNA repair, DNA replication and chromosomal stability. DNA accessibility is regulated via a complex set of post-translational modifications of histones, also called histone code, and nucleosome remodeling.</text>
</comment>
<comment type="subunit">
    <text evidence="2">The nucleosome is a histone octamer containing two molecules each of H2A, H2B, H3 and H4 assembled in one H3-H4 heterotetramer and two H2A-H2B heterodimers. The octamer wraps approximately 147 bp of DNA.</text>
</comment>
<comment type="subcellular location">
    <subcellularLocation>
        <location evidence="2">Nucleus</location>
    </subcellularLocation>
    <subcellularLocation>
        <location evidence="2">Chromosome</location>
    </subcellularLocation>
</comment>
<comment type="similarity">
    <text evidence="2">Belongs to the histone H2A family.</text>
</comment>
<name>H2AL3_HUMAN</name>
<gene>
    <name evidence="3" type="primary">H2AL3</name>
    <name evidence="3" type="synonym">H2AL1RP</name>
</gene>
<proteinExistence type="evidence at protein level"/>
<sequence>MAGNKMFCRPRRQRLSHSRRAELQFPVSHLERCLRESQHARHLSSTTPVFLAGVLEYLTANILEKVGKEVKNSCRLCITPEHVKRALQKDEQLRWILELEDDTHSQVEEMPQSEEEEEEEEEKEEEMVVLVVMGGRRRRRRRRRRKDS</sequence>
<organism>
    <name type="scientific">Homo sapiens</name>
    <name type="common">Human</name>
    <dbReference type="NCBI Taxonomy" id="9606"/>
    <lineage>
        <taxon>Eukaryota</taxon>
        <taxon>Metazoa</taxon>
        <taxon>Chordata</taxon>
        <taxon>Craniata</taxon>
        <taxon>Vertebrata</taxon>
        <taxon>Euteleostomi</taxon>
        <taxon>Mammalia</taxon>
        <taxon>Eutheria</taxon>
        <taxon>Euarchontoglires</taxon>
        <taxon>Primates</taxon>
        <taxon>Haplorrhini</taxon>
        <taxon>Catarrhini</taxon>
        <taxon>Hominidae</taxon>
        <taxon>Homo</taxon>
    </lineage>
</organism>
<keyword id="KW-0158">Chromosome</keyword>
<keyword id="KW-0238">DNA-binding</keyword>
<keyword id="KW-0544">Nucleosome core</keyword>
<keyword id="KW-0539">Nucleus</keyword>
<keyword id="KW-1267">Proteomics identification</keyword>
<keyword id="KW-1185">Reference proteome</keyword>
<dbReference type="EMBL" id="AL121578">
    <property type="status" value="NOT_ANNOTATED_CDS"/>
    <property type="molecule type" value="Genomic_DNA"/>
</dbReference>
<dbReference type="CCDS" id="CCDS94587.1"/>
<dbReference type="RefSeq" id="NP_001382484.1">
    <property type="nucleotide sequence ID" value="NM_001395555.1"/>
</dbReference>
<dbReference type="SMR" id="A0A3B3IU63"/>
<dbReference type="STRING" id="9606.ENSP00000498087"/>
<dbReference type="MassIVE" id="A0A3B3IU63"/>
<dbReference type="PeptideAtlas" id="A0A3B3IU63"/>
<dbReference type="Ensembl" id="ENST00000448797.3">
    <property type="protein sequence ID" value="ENSP00000498087.1"/>
    <property type="gene ID" value="ENSG00000229674.3"/>
</dbReference>
<dbReference type="GeneID" id="115482686"/>
<dbReference type="MANE-Select" id="ENST00000448797.3">
    <property type="protein sequence ID" value="ENSP00000498087.1"/>
    <property type="RefSeq nucleotide sequence ID" value="NM_001395555.1"/>
    <property type="RefSeq protein sequence ID" value="NP_001382484.1"/>
</dbReference>
<dbReference type="AGR" id="HGNC:53960"/>
<dbReference type="GeneCards" id="H2AL3"/>
<dbReference type="HGNC" id="HGNC:53960">
    <property type="gene designation" value="H2AL3"/>
</dbReference>
<dbReference type="HPA" id="ENSG00000229674">
    <property type="expression patterns" value="Tissue enriched (testis)"/>
</dbReference>
<dbReference type="VEuPathDB" id="HostDB:ENSG00000229674"/>
<dbReference type="GeneTree" id="ENSGT00940000162492"/>
<dbReference type="InParanoid" id="A0A3B3IU63"/>
<dbReference type="OMA" id="CLRESQH"/>
<dbReference type="OrthoDB" id="9421954at2759"/>
<dbReference type="PAN-GO" id="A0A3B3IU63">
    <property type="GO annotations" value="1 GO annotation based on evolutionary models"/>
</dbReference>
<dbReference type="PRO" id="PR:A0A3B3IU63"/>
<dbReference type="Proteomes" id="UP000005640">
    <property type="component" value="Chromosome X"/>
</dbReference>
<dbReference type="Bgee" id="ENSG00000229674">
    <property type="expression patterns" value="Expressed in right testis and 18 other cell types or tissues"/>
</dbReference>
<dbReference type="GO" id="GO:0000786">
    <property type="term" value="C:nucleosome"/>
    <property type="evidence" value="ECO:0000318"/>
    <property type="project" value="GO_Central"/>
</dbReference>
<dbReference type="GO" id="GO:0005634">
    <property type="term" value="C:nucleus"/>
    <property type="evidence" value="ECO:0000318"/>
    <property type="project" value="GO_Central"/>
</dbReference>
<dbReference type="GO" id="GO:0003677">
    <property type="term" value="F:DNA binding"/>
    <property type="evidence" value="ECO:0007669"/>
    <property type="project" value="UniProtKB-KW"/>
</dbReference>
<dbReference type="GO" id="GO:0046982">
    <property type="term" value="F:protein heterodimerization activity"/>
    <property type="evidence" value="ECO:0007669"/>
    <property type="project" value="InterPro"/>
</dbReference>
<dbReference type="GO" id="GO:0030527">
    <property type="term" value="F:structural constituent of chromatin"/>
    <property type="evidence" value="ECO:0000318"/>
    <property type="project" value="GO_Central"/>
</dbReference>
<dbReference type="GO" id="GO:0031507">
    <property type="term" value="P:heterochromatin formation"/>
    <property type="evidence" value="ECO:0000318"/>
    <property type="project" value="GO_Central"/>
</dbReference>
<dbReference type="CDD" id="cd00074">
    <property type="entry name" value="HFD_H2A"/>
    <property type="match status" value="1"/>
</dbReference>
<dbReference type="Gene3D" id="1.10.20.10">
    <property type="entry name" value="Histone, subunit A"/>
    <property type="match status" value="1"/>
</dbReference>
<dbReference type="InterPro" id="IPR009072">
    <property type="entry name" value="Histone-fold"/>
</dbReference>
<dbReference type="InterPro" id="IPR002119">
    <property type="entry name" value="Histone_H2A"/>
</dbReference>
<dbReference type="PANTHER" id="PTHR23430">
    <property type="entry name" value="HISTONE H2A"/>
    <property type="match status" value="1"/>
</dbReference>
<dbReference type="PRINTS" id="PR00620">
    <property type="entry name" value="HISTONEH2A"/>
</dbReference>
<dbReference type="SMART" id="SM00414">
    <property type="entry name" value="H2A"/>
    <property type="match status" value="1"/>
</dbReference>
<dbReference type="SUPFAM" id="SSF47113">
    <property type="entry name" value="Histone-fold"/>
    <property type="match status" value="1"/>
</dbReference>
<protein>
    <recommendedName>
        <fullName evidence="2">Histone H2A-like 3</fullName>
        <shortName>H2A.L.3</shortName>
    </recommendedName>
</protein>
<accession>A0A3B3IU63</accession>
<evidence type="ECO:0000256" key="1">
    <source>
        <dbReference type="SAM" id="MobiDB-lite"/>
    </source>
</evidence>
<evidence type="ECO:0000305" key="2"/>
<evidence type="ECO:0000312" key="3">
    <source>
        <dbReference type="HGNC" id="HGNC:53960"/>
    </source>
</evidence>
<feature type="chain" id="PRO_0000454376" description="Histone H2A-like 3">
    <location>
        <begin position="1"/>
        <end position="148"/>
    </location>
</feature>
<feature type="region of interest" description="Disordered" evidence="1">
    <location>
        <begin position="101"/>
        <end position="128"/>
    </location>
</feature>
<feature type="compositionally biased region" description="Acidic residues" evidence="1">
    <location>
        <begin position="111"/>
        <end position="127"/>
    </location>
</feature>